<feature type="chain" id="PRO_1000008802" description="Elongation factor G">
    <location>
        <begin position="1"/>
        <end position="692"/>
    </location>
</feature>
<feature type="domain" description="tr-type G">
    <location>
        <begin position="8"/>
        <end position="282"/>
    </location>
</feature>
<feature type="binding site" evidence="1">
    <location>
        <begin position="17"/>
        <end position="24"/>
    </location>
    <ligand>
        <name>GTP</name>
        <dbReference type="ChEBI" id="CHEBI:37565"/>
    </ligand>
</feature>
<feature type="binding site" evidence="1">
    <location>
        <begin position="81"/>
        <end position="85"/>
    </location>
    <ligand>
        <name>GTP</name>
        <dbReference type="ChEBI" id="CHEBI:37565"/>
    </ligand>
</feature>
<feature type="binding site" evidence="1">
    <location>
        <begin position="135"/>
        <end position="138"/>
    </location>
    <ligand>
        <name>GTP</name>
        <dbReference type="ChEBI" id="CHEBI:37565"/>
    </ligand>
</feature>
<gene>
    <name evidence="1" type="primary">fusA</name>
    <name type="ordered locus">RBAM_001370</name>
</gene>
<comment type="function">
    <text evidence="1">Catalyzes the GTP-dependent ribosomal translocation step during translation elongation. During this step, the ribosome changes from the pre-translocational (PRE) to the post-translocational (POST) state as the newly formed A-site-bound peptidyl-tRNA and P-site-bound deacylated tRNA move to the P and E sites, respectively. Catalyzes the coordinated movement of the two tRNA molecules, the mRNA and conformational changes in the ribosome.</text>
</comment>
<comment type="subcellular location">
    <subcellularLocation>
        <location evidence="1">Cytoplasm</location>
    </subcellularLocation>
</comment>
<comment type="similarity">
    <text evidence="1">Belongs to the TRAFAC class translation factor GTPase superfamily. Classic translation factor GTPase family. EF-G/EF-2 subfamily.</text>
</comment>
<evidence type="ECO:0000255" key="1">
    <source>
        <dbReference type="HAMAP-Rule" id="MF_00054"/>
    </source>
</evidence>
<protein>
    <recommendedName>
        <fullName evidence="1">Elongation factor G</fullName>
        <shortName evidence="1">EF-G</shortName>
    </recommendedName>
</protein>
<proteinExistence type="inferred from homology"/>
<keyword id="KW-0963">Cytoplasm</keyword>
<keyword id="KW-0251">Elongation factor</keyword>
<keyword id="KW-0342">GTP-binding</keyword>
<keyword id="KW-0547">Nucleotide-binding</keyword>
<keyword id="KW-0648">Protein biosynthesis</keyword>
<dbReference type="EMBL" id="CP000560">
    <property type="protein sequence ID" value="ABS72560.1"/>
    <property type="molecule type" value="Genomic_DNA"/>
</dbReference>
<dbReference type="RefSeq" id="WP_007410399.1">
    <property type="nucleotide sequence ID" value="NC_009725.2"/>
</dbReference>
<dbReference type="SMR" id="A7Z0N4"/>
<dbReference type="GeneID" id="93079276"/>
<dbReference type="KEGG" id="bay:RBAM_001370"/>
<dbReference type="HOGENOM" id="CLU_002794_4_1_9"/>
<dbReference type="Proteomes" id="UP000001120">
    <property type="component" value="Chromosome"/>
</dbReference>
<dbReference type="GO" id="GO:0005737">
    <property type="term" value="C:cytoplasm"/>
    <property type="evidence" value="ECO:0007669"/>
    <property type="project" value="UniProtKB-SubCell"/>
</dbReference>
<dbReference type="GO" id="GO:0005525">
    <property type="term" value="F:GTP binding"/>
    <property type="evidence" value="ECO:0007669"/>
    <property type="project" value="UniProtKB-UniRule"/>
</dbReference>
<dbReference type="GO" id="GO:0003924">
    <property type="term" value="F:GTPase activity"/>
    <property type="evidence" value="ECO:0007669"/>
    <property type="project" value="InterPro"/>
</dbReference>
<dbReference type="GO" id="GO:0003746">
    <property type="term" value="F:translation elongation factor activity"/>
    <property type="evidence" value="ECO:0007669"/>
    <property type="project" value="UniProtKB-UniRule"/>
</dbReference>
<dbReference type="GO" id="GO:0032790">
    <property type="term" value="P:ribosome disassembly"/>
    <property type="evidence" value="ECO:0007669"/>
    <property type="project" value="TreeGrafter"/>
</dbReference>
<dbReference type="CDD" id="cd01886">
    <property type="entry name" value="EF-G"/>
    <property type="match status" value="1"/>
</dbReference>
<dbReference type="CDD" id="cd16262">
    <property type="entry name" value="EFG_III"/>
    <property type="match status" value="1"/>
</dbReference>
<dbReference type="CDD" id="cd01434">
    <property type="entry name" value="EFG_mtEFG1_IV"/>
    <property type="match status" value="1"/>
</dbReference>
<dbReference type="CDD" id="cd03713">
    <property type="entry name" value="EFG_mtEFG_C"/>
    <property type="match status" value="1"/>
</dbReference>
<dbReference type="CDD" id="cd04088">
    <property type="entry name" value="EFG_mtEFG_II"/>
    <property type="match status" value="1"/>
</dbReference>
<dbReference type="FunFam" id="2.40.30.10:FF:000006">
    <property type="entry name" value="Elongation factor G"/>
    <property type="match status" value="1"/>
</dbReference>
<dbReference type="FunFam" id="3.30.230.10:FF:000003">
    <property type="entry name" value="Elongation factor G"/>
    <property type="match status" value="1"/>
</dbReference>
<dbReference type="FunFam" id="3.30.70.240:FF:000001">
    <property type="entry name" value="Elongation factor G"/>
    <property type="match status" value="1"/>
</dbReference>
<dbReference type="FunFam" id="3.30.70.870:FF:000001">
    <property type="entry name" value="Elongation factor G"/>
    <property type="match status" value="1"/>
</dbReference>
<dbReference type="FunFam" id="3.40.50.300:FF:000029">
    <property type="entry name" value="Elongation factor G"/>
    <property type="match status" value="1"/>
</dbReference>
<dbReference type="Gene3D" id="3.30.230.10">
    <property type="match status" value="1"/>
</dbReference>
<dbReference type="Gene3D" id="3.30.70.240">
    <property type="match status" value="1"/>
</dbReference>
<dbReference type="Gene3D" id="3.30.70.870">
    <property type="entry name" value="Elongation Factor G (Translational Gtpase), domain 3"/>
    <property type="match status" value="1"/>
</dbReference>
<dbReference type="Gene3D" id="3.40.50.300">
    <property type="entry name" value="P-loop containing nucleotide triphosphate hydrolases"/>
    <property type="match status" value="1"/>
</dbReference>
<dbReference type="Gene3D" id="2.40.30.10">
    <property type="entry name" value="Translation factors"/>
    <property type="match status" value="1"/>
</dbReference>
<dbReference type="HAMAP" id="MF_00054_B">
    <property type="entry name" value="EF_G_EF_2_B"/>
    <property type="match status" value="1"/>
</dbReference>
<dbReference type="InterPro" id="IPR041095">
    <property type="entry name" value="EFG_II"/>
</dbReference>
<dbReference type="InterPro" id="IPR009022">
    <property type="entry name" value="EFG_III"/>
</dbReference>
<dbReference type="InterPro" id="IPR035647">
    <property type="entry name" value="EFG_III/V"/>
</dbReference>
<dbReference type="InterPro" id="IPR047872">
    <property type="entry name" value="EFG_IV"/>
</dbReference>
<dbReference type="InterPro" id="IPR035649">
    <property type="entry name" value="EFG_V"/>
</dbReference>
<dbReference type="InterPro" id="IPR000640">
    <property type="entry name" value="EFG_V-like"/>
</dbReference>
<dbReference type="InterPro" id="IPR004161">
    <property type="entry name" value="EFTu-like_2"/>
</dbReference>
<dbReference type="InterPro" id="IPR031157">
    <property type="entry name" value="G_TR_CS"/>
</dbReference>
<dbReference type="InterPro" id="IPR027417">
    <property type="entry name" value="P-loop_NTPase"/>
</dbReference>
<dbReference type="InterPro" id="IPR020568">
    <property type="entry name" value="Ribosomal_Su5_D2-typ_SF"/>
</dbReference>
<dbReference type="InterPro" id="IPR014721">
    <property type="entry name" value="Ribsml_uS5_D2-typ_fold_subgr"/>
</dbReference>
<dbReference type="InterPro" id="IPR005225">
    <property type="entry name" value="Small_GTP-bd"/>
</dbReference>
<dbReference type="InterPro" id="IPR000795">
    <property type="entry name" value="T_Tr_GTP-bd_dom"/>
</dbReference>
<dbReference type="InterPro" id="IPR009000">
    <property type="entry name" value="Transl_B-barrel_sf"/>
</dbReference>
<dbReference type="InterPro" id="IPR004540">
    <property type="entry name" value="Transl_elong_EFG/EF2"/>
</dbReference>
<dbReference type="InterPro" id="IPR005517">
    <property type="entry name" value="Transl_elong_EFG/EF2_IV"/>
</dbReference>
<dbReference type="NCBIfam" id="TIGR00484">
    <property type="entry name" value="EF-G"/>
    <property type="match status" value="1"/>
</dbReference>
<dbReference type="NCBIfam" id="NF009379">
    <property type="entry name" value="PRK12740.1-3"/>
    <property type="match status" value="1"/>
</dbReference>
<dbReference type="NCBIfam" id="NF009381">
    <property type="entry name" value="PRK12740.1-5"/>
    <property type="match status" value="1"/>
</dbReference>
<dbReference type="NCBIfam" id="TIGR00231">
    <property type="entry name" value="small_GTP"/>
    <property type="match status" value="1"/>
</dbReference>
<dbReference type="PANTHER" id="PTHR43261:SF1">
    <property type="entry name" value="RIBOSOME-RELEASING FACTOR 2, MITOCHONDRIAL"/>
    <property type="match status" value="1"/>
</dbReference>
<dbReference type="PANTHER" id="PTHR43261">
    <property type="entry name" value="TRANSLATION ELONGATION FACTOR G-RELATED"/>
    <property type="match status" value="1"/>
</dbReference>
<dbReference type="Pfam" id="PF00679">
    <property type="entry name" value="EFG_C"/>
    <property type="match status" value="1"/>
</dbReference>
<dbReference type="Pfam" id="PF14492">
    <property type="entry name" value="EFG_III"/>
    <property type="match status" value="1"/>
</dbReference>
<dbReference type="Pfam" id="PF03764">
    <property type="entry name" value="EFG_IV"/>
    <property type="match status" value="1"/>
</dbReference>
<dbReference type="Pfam" id="PF00009">
    <property type="entry name" value="GTP_EFTU"/>
    <property type="match status" value="1"/>
</dbReference>
<dbReference type="Pfam" id="PF03144">
    <property type="entry name" value="GTP_EFTU_D2"/>
    <property type="match status" value="1"/>
</dbReference>
<dbReference type="PRINTS" id="PR00315">
    <property type="entry name" value="ELONGATNFCT"/>
</dbReference>
<dbReference type="SMART" id="SM00838">
    <property type="entry name" value="EFG_C"/>
    <property type="match status" value="1"/>
</dbReference>
<dbReference type="SMART" id="SM00889">
    <property type="entry name" value="EFG_IV"/>
    <property type="match status" value="1"/>
</dbReference>
<dbReference type="SUPFAM" id="SSF54980">
    <property type="entry name" value="EF-G C-terminal domain-like"/>
    <property type="match status" value="2"/>
</dbReference>
<dbReference type="SUPFAM" id="SSF52540">
    <property type="entry name" value="P-loop containing nucleoside triphosphate hydrolases"/>
    <property type="match status" value="1"/>
</dbReference>
<dbReference type="SUPFAM" id="SSF54211">
    <property type="entry name" value="Ribosomal protein S5 domain 2-like"/>
    <property type="match status" value="1"/>
</dbReference>
<dbReference type="SUPFAM" id="SSF50447">
    <property type="entry name" value="Translation proteins"/>
    <property type="match status" value="1"/>
</dbReference>
<dbReference type="PROSITE" id="PS00301">
    <property type="entry name" value="G_TR_1"/>
    <property type="match status" value="1"/>
</dbReference>
<dbReference type="PROSITE" id="PS51722">
    <property type="entry name" value="G_TR_2"/>
    <property type="match status" value="1"/>
</dbReference>
<name>EFG_BACVZ</name>
<organism>
    <name type="scientific">Bacillus velezensis (strain DSM 23117 / BGSC 10A6 / LMG 26770 / FZB42)</name>
    <name type="common">Bacillus amyloliquefaciens subsp. plantarum</name>
    <dbReference type="NCBI Taxonomy" id="326423"/>
    <lineage>
        <taxon>Bacteria</taxon>
        <taxon>Bacillati</taxon>
        <taxon>Bacillota</taxon>
        <taxon>Bacilli</taxon>
        <taxon>Bacillales</taxon>
        <taxon>Bacillaceae</taxon>
        <taxon>Bacillus</taxon>
        <taxon>Bacillus amyloliquefaciens group</taxon>
    </lineage>
</organism>
<sequence length="692" mass="76535">MAREFSLEKTRNIGIMAHIDAGKTTTTERILFYTGRIHKIGETHEGASQMDWMEQEQERGITITSAATTAQWKGYRVNIIDTPGHVDFTVEVERSLRVLDGAVAVLDAQSGVEPQTETVWRQATTYGVPRVVFVNKMDKIGADFLYSVGTLRDRLQANAHAIQLPIGAEDNFEGIIDLVENVAYFYEDDLGTRSDAKEIPEEYKEQAEELRSSLIEAVAELDEELMEKYLEGEEITIPELKAAIRKGTLNVEFYPVLVGSAFKNKGVQLVLDAVLDYLPAPTDVAAIKGVRPDTDEEIVRHSSDEEPFSALAFKVMTDPYVGKLTFFRVYSGTLDSGSYVKNSTKGKRERVGRILQMHANSREEISTVYAGDIAAAVGLKDTSTGDTLCDEKDLVILESMEFPEPVIDVAIEPKSKADQDKMGIALAKLAEEDPTFRTQTNPETGQTIISGMGELHLDIIVDRMKREFKVEANVGAPQVAYRETFRTGAKVEGKFVRQSGGRGQFGHVWIEFEPNEEGAGFEFENAIVGGVVPREYIPAVQAGLEDSLENGVLAGFPLIDIKAKLFDGSYHDVDSNEMAFKVAASMALKNAVSKCNPVLLEPIMKVEVVIPEEYMGDIMGDVTSRRGRVEGMEARGNAQVVRAMVPLAEMFGYATALRSNTQGRGTFTMFMDHYEEVPKSIAEEIIKKNKGE</sequence>
<accession>A7Z0N4</accession>
<reference key="1">
    <citation type="journal article" date="2007" name="Nat. Biotechnol.">
        <title>Comparative analysis of the complete genome sequence of the plant growth-promoting bacterium Bacillus amyloliquefaciens FZB42.</title>
        <authorList>
            <person name="Chen X.H."/>
            <person name="Koumoutsi A."/>
            <person name="Scholz R."/>
            <person name="Eisenreich A."/>
            <person name="Schneider K."/>
            <person name="Heinemeyer I."/>
            <person name="Morgenstern B."/>
            <person name="Voss B."/>
            <person name="Hess W.R."/>
            <person name="Reva O."/>
            <person name="Junge H."/>
            <person name="Voigt B."/>
            <person name="Jungblut P.R."/>
            <person name="Vater J."/>
            <person name="Suessmuth R."/>
            <person name="Liesegang H."/>
            <person name="Strittmatter A."/>
            <person name="Gottschalk G."/>
            <person name="Borriss R."/>
        </authorList>
    </citation>
    <scope>NUCLEOTIDE SEQUENCE [LARGE SCALE GENOMIC DNA]</scope>
    <source>
        <strain>DSM 23117 / BGSC 10A6 / LMG 26770 / FZB42</strain>
    </source>
</reference>